<proteinExistence type="inferred from homology"/>
<dbReference type="EMBL" id="Y16860">
    <property type="protein sequence ID" value="CAA76475.1"/>
    <property type="molecule type" value="Genomic_DNA"/>
</dbReference>
<dbReference type="EMBL" id="AB010790">
    <property type="protein sequence ID" value="BAA28718.1"/>
    <property type="molecule type" value="Genomic_DNA"/>
</dbReference>
<dbReference type="EMBL" id="CM000364">
    <property type="protein sequence ID" value="EDX14991.1"/>
    <property type="molecule type" value="Genomic_DNA"/>
</dbReference>
<dbReference type="STRING" id="7240.P67792"/>
<dbReference type="EnsemblMetazoa" id="FBtr0217100">
    <property type="protein sequence ID" value="FBpp0215592"/>
    <property type="gene ID" value="FBgn0025038"/>
</dbReference>
<dbReference type="EnsemblMetazoa" id="XM_002105452.4">
    <property type="protein sequence ID" value="XP_002105488.1"/>
    <property type="gene ID" value="LOC6730203"/>
</dbReference>
<dbReference type="GeneID" id="6730203"/>
<dbReference type="KEGG" id="dsi:Dsimw501_GD17190"/>
<dbReference type="HOGENOM" id="CLU_187909_1_0_1"/>
<dbReference type="OMA" id="GHSEANW"/>
<dbReference type="OrthoDB" id="7410372at2759"/>
<dbReference type="PhylomeDB" id="P67792"/>
<dbReference type="Proteomes" id="UP000000304">
    <property type="component" value="Chromosome 3R"/>
</dbReference>
<dbReference type="Bgee" id="FBgn0025038">
    <property type="expression patterns" value="Expressed in adult organism"/>
</dbReference>
<dbReference type="GO" id="GO:0005576">
    <property type="term" value="C:extracellular region"/>
    <property type="evidence" value="ECO:0000250"/>
    <property type="project" value="UniProtKB"/>
</dbReference>
<dbReference type="GO" id="GO:0005615">
    <property type="term" value="C:extracellular space"/>
    <property type="evidence" value="ECO:0007669"/>
    <property type="project" value="EnsemblMetazoa"/>
</dbReference>
<dbReference type="GO" id="GO:0019731">
    <property type="term" value="P:antibacterial humoral response"/>
    <property type="evidence" value="ECO:0007669"/>
    <property type="project" value="EnsemblMetazoa"/>
</dbReference>
<dbReference type="GO" id="GO:0050829">
    <property type="term" value="P:defense response to Gram-negative bacterium"/>
    <property type="evidence" value="ECO:0000250"/>
    <property type="project" value="UniProtKB"/>
</dbReference>
<dbReference type="GO" id="GO:0050830">
    <property type="term" value="P:defense response to Gram-positive bacterium"/>
    <property type="evidence" value="ECO:0000250"/>
    <property type="project" value="UniProtKB"/>
</dbReference>
<dbReference type="GO" id="GO:0002213">
    <property type="term" value="P:defense response to insect"/>
    <property type="evidence" value="ECO:0007669"/>
    <property type="project" value="EnsemblMetazoa"/>
</dbReference>
<dbReference type="GO" id="GO:0051607">
    <property type="term" value="P:defense response to virus"/>
    <property type="evidence" value="ECO:0007669"/>
    <property type="project" value="EnsemblMetazoa"/>
</dbReference>
<dbReference type="GO" id="GO:0045087">
    <property type="term" value="P:innate immune response"/>
    <property type="evidence" value="ECO:0007669"/>
    <property type="project" value="UniProtKB-KW"/>
</dbReference>
<dbReference type="GO" id="GO:0140460">
    <property type="term" value="P:response to Gram-negative bacterium"/>
    <property type="evidence" value="ECO:0007669"/>
    <property type="project" value="EnsemblMetazoa"/>
</dbReference>
<dbReference type="InterPro" id="IPR000875">
    <property type="entry name" value="Cecropin"/>
</dbReference>
<dbReference type="InterPro" id="IPR020400">
    <property type="entry name" value="Cecropin_insect"/>
</dbReference>
<dbReference type="PANTHER" id="PTHR38329">
    <property type="entry name" value="CECROPIN-A1-RELATED"/>
    <property type="match status" value="1"/>
</dbReference>
<dbReference type="PANTHER" id="PTHR38329:SF1">
    <property type="entry name" value="CECROPIN-A1-RELATED"/>
    <property type="match status" value="1"/>
</dbReference>
<dbReference type="Pfam" id="PF00272">
    <property type="entry name" value="Cecropin"/>
    <property type="match status" value="1"/>
</dbReference>
<dbReference type="PROSITE" id="PS00268">
    <property type="entry name" value="CECROPIN"/>
    <property type="match status" value="1"/>
</dbReference>
<protein>
    <recommendedName>
        <fullName>Cecropin-B</fullName>
    </recommendedName>
</protein>
<organism>
    <name type="scientific">Drosophila simulans</name>
    <name type="common">Fruit fly</name>
    <dbReference type="NCBI Taxonomy" id="7240"/>
    <lineage>
        <taxon>Eukaryota</taxon>
        <taxon>Metazoa</taxon>
        <taxon>Ecdysozoa</taxon>
        <taxon>Arthropoda</taxon>
        <taxon>Hexapoda</taxon>
        <taxon>Insecta</taxon>
        <taxon>Pterygota</taxon>
        <taxon>Neoptera</taxon>
        <taxon>Endopterygota</taxon>
        <taxon>Diptera</taxon>
        <taxon>Brachycera</taxon>
        <taxon>Muscomorpha</taxon>
        <taxon>Ephydroidea</taxon>
        <taxon>Drosophilidae</taxon>
        <taxon>Drosophila</taxon>
        <taxon>Sophophora</taxon>
    </lineage>
</organism>
<reference key="1">
    <citation type="journal article" date="1998" name="Genetics">
        <title>Molecular evolution of the Cecropin multigene family in Drosophila: functional genes vs pseudogenes.</title>
        <authorList>
            <person name="Ramos-Onsins S."/>
            <person name="Aguade M."/>
        </authorList>
    </citation>
    <scope>NUCLEOTIDE SEQUENCE [GENOMIC DNA]</scope>
    <source>
        <strain>Montemayor</strain>
    </source>
</reference>
<reference key="2">
    <citation type="journal article" date="1998" name="Immunogenetics">
        <title>Evolutionary history and mechanism of the Drosophila cecropin gene family.</title>
        <authorList>
            <person name="Date A."/>
            <person name="Satta Y."/>
            <person name="Takahata N."/>
            <person name="Chigusa S.I."/>
        </authorList>
    </citation>
    <scope>NUCLEOTIDE SEQUENCE [GENOMIC DNA]</scope>
</reference>
<reference key="3">
    <citation type="journal article" date="2007" name="Nature">
        <title>Evolution of genes and genomes on the Drosophila phylogeny.</title>
        <authorList>
            <consortium name="Drosophila 12 genomes consortium"/>
        </authorList>
    </citation>
    <scope>NUCLEOTIDE SEQUENCE [LARGE SCALE GENOMIC DNA]</scope>
</reference>
<evidence type="ECO:0000250" key="1"/>
<evidence type="ECO:0000255" key="2"/>
<evidence type="ECO:0000305" key="3"/>
<sequence>MNFNKIFVFVALILAISLGNTEAGWLRKLGKKIERIGQHTRDASIQVLGIAQQAANVAATARG</sequence>
<name>CECB_DROSI</name>
<accession>P67792</accession>
<accession>B4R1K3</accession>
<accession>O61273</accession>
<accession>P81689</accession>
<gene>
    <name type="primary">CecB</name>
    <name type="ORF">GD17190</name>
</gene>
<comment type="function">
    <text>Cecropins have lytic and antibacterial activity against several Gram-positive and Gram-negative bacteria.</text>
</comment>
<comment type="subcellular location">
    <subcellularLocation>
        <location>Secreted</location>
    </subcellularLocation>
</comment>
<comment type="similarity">
    <text evidence="3">Belongs to the cecropin family.</text>
</comment>
<keyword id="KW-0027">Amidation</keyword>
<keyword id="KW-0044">Antibiotic</keyword>
<keyword id="KW-0929">Antimicrobial</keyword>
<keyword id="KW-0391">Immunity</keyword>
<keyword id="KW-0399">Innate immunity</keyword>
<keyword id="KW-1185">Reference proteome</keyword>
<keyword id="KW-0964">Secreted</keyword>
<keyword id="KW-0732">Signal</keyword>
<feature type="signal peptide" evidence="2">
    <location>
        <begin position="1"/>
        <end position="22"/>
    </location>
</feature>
<feature type="chain" id="PRO_0000004846" description="Cecropin-B">
    <location>
        <begin position="23"/>
        <end position="62"/>
    </location>
</feature>
<feature type="modified residue" description="Arginine amide" evidence="1">
    <location>
        <position position="62"/>
    </location>
</feature>